<gene>
    <name type="ordered locus">HI_0755</name>
</gene>
<accession>P44863</accession>
<comment type="similarity">
    <text evidence="2">To E.coli YibQ.</text>
</comment>
<comment type="sequence caution" evidence="2">
    <conflict type="erroneous initiation">
        <sequence resource="EMBL-CDS" id="AAC22414"/>
    </conflict>
</comment>
<dbReference type="EMBL" id="L42023">
    <property type="protein sequence ID" value="AAC22414.1"/>
    <property type="status" value="ALT_INIT"/>
    <property type="molecule type" value="Genomic_DNA"/>
</dbReference>
<dbReference type="RefSeq" id="NP_438914.2">
    <property type="nucleotide sequence ID" value="NC_000907.1"/>
</dbReference>
<dbReference type="SMR" id="P44863"/>
<dbReference type="STRING" id="71421.HI_0755"/>
<dbReference type="EnsemblBacteria" id="AAC22414">
    <property type="protein sequence ID" value="AAC22414"/>
    <property type="gene ID" value="HI_0755"/>
</dbReference>
<dbReference type="KEGG" id="hin:HI_0755"/>
<dbReference type="PATRIC" id="fig|71421.8.peg.793"/>
<dbReference type="eggNOG" id="COG2861">
    <property type="taxonomic scope" value="Bacteria"/>
</dbReference>
<dbReference type="HOGENOM" id="CLU_041643_2_0_6"/>
<dbReference type="OrthoDB" id="9784811at2"/>
<dbReference type="PhylomeDB" id="P44863"/>
<dbReference type="BioCyc" id="HINF71421:G1GJ1-793-MONOMER"/>
<dbReference type="Proteomes" id="UP000000579">
    <property type="component" value="Chromosome"/>
</dbReference>
<dbReference type="GO" id="GO:0005975">
    <property type="term" value="P:carbohydrate metabolic process"/>
    <property type="evidence" value="ECO:0007669"/>
    <property type="project" value="InterPro"/>
</dbReference>
<dbReference type="CDD" id="cd10936">
    <property type="entry name" value="CE4_DAC2"/>
    <property type="match status" value="1"/>
</dbReference>
<dbReference type="Gene3D" id="3.20.20.370">
    <property type="entry name" value="Glycoside hydrolase/deacetylase"/>
    <property type="match status" value="1"/>
</dbReference>
<dbReference type="InterPro" id="IPR006837">
    <property type="entry name" value="Divergent_DAC"/>
</dbReference>
<dbReference type="InterPro" id="IPR011330">
    <property type="entry name" value="Glyco_hydro/deAcase_b/a-brl"/>
</dbReference>
<dbReference type="PANTHER" id="PTHR30105:SF2">
    <property type="entry name" value="DIVERGENT POLYSACCHARIDE DEACETYLASE SUPERFAMILY"/>
    <property type="match status" value="1"/>
</dbReference>
<dbReference type="PANTHER" id="PTHR30105">
    <property type="entry name" value="UNCHARACTERIZED YIBQ-RELATED"/>
    <property type="match status" value="1"/>
</dbReference>
<dbReference type="Pfam" id="PF04748">
    <property type="entry name" value="Polysacc_deac_2"/>
    <property type="match status" value="1"/>
</dbReference>
<dbReference type="SUPFAM" id="SSF88713">
    <property type="entry name" value="Glycoside hydrolase/deacetylase"/>
    <property type="match status" value="1"/>
</dbReference>
<protein>
    <recommendedName>
        <fullName>Uncharacterized protein HI_0755</fullName>
    </recommendedName>
</protein>
<feature type="signal peptide" evidence="1">
    <location>
        <begin position="1"/>
        <end position="26"/>
    </location>
</feature>
<feature type="chain" id="PRO_0000013927" description="Uncharacterized protein HI_0755">
    <location>
        <begin position="27"/>
        <end position="280"/>
    </location>
</feature>
<evidence type="ECO:0000255" key="1"/>
<evidence type="ECO:0000305" key="2"/>
<name>Y755_HAEIN</name>
<organism>
    <name type="scientific">Haemophilus influenzae (strain ATCC 51907 / DSM 11121 / KW20 / Rd)</name>
    <dbReference type="NCBI Taxonomy" id="71421"/>
    <lineage>
        <taxon>Bacteria</taxon>
        <taxon>Pseudomonadati</taxon>
        <taxon>Pseudomonadota</taxon>
        <taxon>Gammaproteobacteria</taxon>
        <taxon>Pasteurellales</taxon>
        <taxon>Pasteurellaceae</taxon>
        <taxon>Haemophilus</taxon>
    </lineage>
</organism>
<proteinExistence type="evidence at protein level"/>
<keyword id="KW-1185">Reference proteome</keyword>
<keyword id="KW-0732">Signal</keyword>
<reference key="1">
    <citation type="journal article" date="1995" name="Science">
        <title>Whole-genome random sequencing and assembly of Haemophilus influenzae Rd.</title>
        <authorList>
            <person name="Fleischmann R.D."/>
            <person name="Adams M.D."/>
            <person name="White O."/>
            <person name="Clayton R.A."/>
            <person name="Kirkness E.F."/>
            <person name="Kerlavage A.R."/>
            <person name="Bult C.J."/>
            <person name="Tomb J.-F."/>
            <person name="Dougherty B.A."/>
            <person name="Merrick J.M."/>
            <person name="McKenney K."/>
            <person name="Sutton G.G."/>
            <person name="FitzHugh W."/>
            <person name="Fields C.A."/>
            <person name="Gocayne J.D."/>
            <person name="Scott J.D."/>
            <person name="Shirley R."/>
            <person name="Liu L.-I."/>
            <person name="Glodek A."/>
            <person name="Kelley J.M."/>
            <person name="Weidman J.F."/>
            <person name="Phillips C.A."/>
            <person name="Spriggs T."/>
            <person name="Hedblom E."/>
            <person name="Cotton M.D."/>
            <person name="Utterback T.R."/>
            <person name="Hanna M.C."/>
            <person name="Nguyen D.T."/>
            <person name="Saudek D.M."/>
            <person name="Brandon R.C."/>
            <person name="Fine L.D."/>
            <person name="Fritchman J.L."/>
            <person name="Fuhrmann J.L."/>
            <person name="Geoghagen N.S.M."/>
            <person name="Gnehm C.L."/>
            <person name="McDonald L.A."/>
            <person name="Small K.V."/>
            <person name="Fraser C.M."/>
            <person name="Smith H.O."/>
            <person name="Venter J.C."/>
        </authorList>
    </citation>
    <scope>NUCLEOTIDE SEQUENCE [LARGE SCALE GENOMIC DNA]</scope>
    <source>
        <strain>ATCC 51907 / DSM 11121 / KW20 / Rd</strain>
    </source>
</reference>
<reference key="2">
    <citation type="journal article" date="2000" name="Electrophoresis">
        <title>Two-dimensional map of the proteome of Haemophilus influenzae.</title>
        <authorList>
            <person name="Langen H."/>
            <person name="Takacs B."/>
            <person name="Evers S."/>
            <person name="Berndt P."/>
            <person name="Lahm H.W."/>
            <person name="Wipf B."/>
            <person name="Gray C."/>
            <person name="Fountoulakis M."/>
        </authorList>
    </citation>
    <scope>IDENTIFICATION BY MASS SPECTROMETRY</scope>
    <source>
        <strain>ATCC 51907 / DSM 11121 / KW20 / Rd</strain>
    </source>
</reference>
<sequence length="280" mass="30741">MNILIKSAVKNFIVFSTALYTSFSFAQSKLAIVIDDVGYHLKEDAAIFAMPREISVAIIPAAPYARARNQEAKSQGRDILIHMPMQPVSAVKIEDGGLHLGMSAAQVNDRVNTAKNIVRDAIGMNNHMGSAATADPQLMTYLMTALQEKHLFFLDSRTIGKSVAGKIAKEQGVRSLDRHIFLDDSNEFADVQRQFKAAIHYARKHGSAIAIGHPRPNTIAVLQAGLRNLPEDIQLVGMGNLWRNEKVIPPKPFILLFSEVPAPTSIEPFEPVGLLRGIPK</sequence>